<sequence length="65" mass="6786">MANAQQQVFGGGGGDDAENNDAPQQGSGTQQVNVTGTDDLLDEIDGLLETNAEEFVRSYVQKGGQ</sequence>
<reference key="1">
    <citation type="journal article" date="2008" name="J. Biotechnol.">
        <title>The lifestyle of Corynebacterium urealyticum derived from its complete genome sequence established by pyrosequencing.</title>
        <authorList>
            <person name="Tauch A."/>
            <person name="Trost E."/>
            <person name="Tilker A."/>
            <person name="Ludewig U."/>
            <person name="Schneiker S."/>
            <person name="Goesmann A."/>
            <person name="Arnold W."/>
            <person name="Bekel T."/>
            <person name="Brinkrolf K."/>
            <person name="Brune I."/>
            <person name="Goetker S."/>
            <person name="Kalinowski J."/>
            <person name="Kamp P.-B."/>
            <person name="Lobo F.P."/>
            <person name="Viehoever P."/>
            <person name="Weisshaar B."/>
            <person name="Soriano F."/>
            <person name="Droege M."/>
            <person name="Puehler A."/>
        </authorList>
    </citation>
    <scope>NUCLEOTIDE SEQUENCE [LARGE SCALE GENOMIC DNA]</scope>
    <source>
        <strain>ATCC 43042 / DSM 7109</strain>
    </source>
</reference>
<organism>
    <name type="scientific">Corynebacterium urealyticum (strain ATCC 43042 / DSM 7109)</name>
    <dbReference type="NCBI Taxonomy" id="504474"/>
    <lineage>
        <taxon>Bacteria</taxon>
        <taxon>Bacillati</taxon>
        <taxon>Actinomycetota</taxon>
        <taxon>Actinomycetes</taxon>
        <taxon>Mycobacteriales</taxon>
        <taxon>Corynebacteriaceae</taxon>
        <taxon>Corynebacterium</taxon>
    </lineage>
</organism>
<gene>
    <name evidence="1" type="primary">pup</name>
    <name type="ordered locus">cu1042</name>
</gene>
<comment type="function">
    <text evidence="1">Protein modifier that is covalently attached to lysine residues of substrate proteins, thereby targeting them for proteasomal degradation. The tagging system is termed pupylation.</text>
</comment>
<comment type="pathway">
    <text evidence="1">Protein degradation; proteasomal Pup-dependent pathway.</text>
</comment>
<comment type="subunit">
    <text evidence="1">Strongly interacts with the proteasome-associated ATPase ARC through a hydrophobic interface; the interacting region of Pup lies in its C-terminal half. There is one Pup binding site per ARC hexamer ring.</text>
</comment>
<comment type="domain">
    <text evidence="1">The N-terminal unstructured half of Pup provides a signal required to initiate unfolding and degradation by the proteasome but is not needed for pupylation, while the C-terminal helical half of Pup interacts with ARC to target proteins to the proteasome.</text>
</comment>
<comment type="PTM">
    <text evidence="1">Is modified by deamidation of its C-terminal glutamine to glutamate by the deamidase Dop, a prerequisite to the subsequent pupylation process.</text>
</comment>
<comment type="similarity">
    <text evidence="1">Belongs to the prokaryotic ubiquitin-like protein family.</text>
</comment>
<dbReference type="EMBL" id="AM942444">
    <property type="protein sequence ID" value="CAQ05002.1"/>
    <property type="molecule type" value="Genomic_DNA"/>
</dbReference>
<dbReference type="RefSeq" id="WP_012360290.1">
    <property type="nucleotide sequence ID" value="NC_010545.1"/>
</dbReference>
<dbReference type="SMR" id="B1VDV4"/>
<dbReference type="STRING" id="504474.cu1042"/>
<dbReference type="KEGG" id="cur:cu1042"/>
<dbReference type="eggNOG" id="ENOG5033BS6">
    <property type="taxonomic scope" value="Bacteria"/>
</dbReference>
<dbReference type="HOGENOM" id="CLU_183816_1_0_11"/>
<dbReference type="UniPathway" id="UPA00997"/>
<dbReference type="Proteomes" id="UP000001727">
    <property type="component" value="Chromosome"/>
</dbReference>
<dbReference type="GO" id="GO:0070628">
    <property type="term" value="F:proteasome binding"/>
    <property type="evidence" value="ECO:0007669"/>
    <property type="project" value="UniProtKB-UniRule"/>
</dbReference>
<dbReference type="GO" id="GO:0031386">
    <property type="term" value="F:protein tag activity"/>
    <property type="evidence" value="ECO:0007669"/>
    <property type="project" value="UniProtKB-UniRule"/>
</dbReference>
<dbReference type="GO" id="GO:0019941">
    <property type="term" value="P:modification-dependent protein catabolic process"/>
    <property type="evidence" value="ECO:0007669"/>
    <property type="project" value="UniProtKB-UniRule"/>
</dbReference>
<dbReference type="GO" id="GO:0010498">
    <property type="term" value="P:proteasomal protein catabolic process"/>
    <property type="evidence" value="ECO:0007669"/>
    <property type="project" value="UniProtKB-UniRule"/>
</dbReference>
<dbReference type="GO" id="GO:0070490">
    <property type="term" value="P:protein pupylation"/>
    <property type="evidence" value="ECO:0007669"/>
    <property type="project" value="UniProtKB-UniRule"/>
</dbReference>
<dbReference type="HAMAP" id="MF_02106">
    <property type="entry name" value="Pup"/>
    <property type="match status" value="1"/>
</dbReference>
<dbReference type="InterPro" id="IPR008515">
    <property type="entry name" value="Ubiquitin-like_Pup"/>
</dbReference>
<dbReference type="NCBIfam" id="TIGR03687">
    <property type="entry name" value="pupylate_cterm"/>
    <property type="match status" value="1"/>
</dbReference>
<dbReference type="Pfam" id="PF05639">
    <property type="entry name" value="Pup"/>
    <property type="match status" value="1"/>
</dbReference>
<keyword id="KW-1017">Isopeptide bond</keyword>
<keyword id="KW-1185">Reference proteome</keyword>
<keyword id="KW-0833">Ubl conjugation pathway</keyword>
<accession>B1VDV4</accession>
<proteinExistence type="inferred from homology"/>
<evidence type="ECO:0000255" key="1">
    <source>
        <dbReference type="HAMAP-Rule" id="MF_02106"/>
    </source>
</evidence>
<evidence type="ECO:0000256" key="2">
    <source>
        <dbReference type="SAM" id="MobiDB-lite"/>
    </source>
</evidence>
<protein>
    <recommendedName>
        <fullName evidence="1">Prokaryotic ubiquitin-like protein Pup</fullName>
    </recommendedName>
    <alternativeName>
        <fullName evidence="1">Bacterial ubiquitin-like modifier</fullName>
    </alternativeName>
</protein>
<name>PUP_CORU7</name>
<feature type="chain" id="PRO_0000390580" description="Prokaryotic ubiquitin-like protein Pup">
    <location>
        <begin position="1"/>
        <end position="65"/>
    </location>
</feature>
<feature type="region of interest" description="Disordered" evidence="2">
    <location>
        <begin position="1"/>
        <end position="38"/>
    </location>
</feature>
<feature type="region of interest" description="ARC ATPase binding" evidence="1">
    <location>
        <begin position="21"/>
        <end position="59"/>
    </location>
</feature>
<feature type="compositionally biased region" description="Polar residues" evidence="2">
    <location>
        <begin position="22"/>
        <end position="34"/>
    </location>
</feature>
<feature type="modified residue" description="Deamidated glutamine" evidence="1">
    <location>
        <position position="65"/>
    </location>
</feature>
<feature type="cross-link" description="Isoglutamyl lysine isopeptide (Gln-Lys) (interchain with K-? in acceptor proteins)" evidence="1">
    <location>
        <position position="65"/>
    </location>
</feature>